<protein>
    <recommendedName>
        <fullName evidence="1">Cell division protein ZapD</fullName>
    </recommendedName>
    <alternativeName>
        <fullName evidence="1">Z ring-associated protein D</fullName>
    </alternativeName>
</protein>
<organism>
    <name type="scientific">Yersinia pestis bv. Antiqua (strain Nepal516)</name>
    <dbReference type="NCBI Taxonomy" id="377628"/>
    <lineage>
        <taxon>Bacteria</taxon>
        <taxon>Pseudomonadati</taxon>
        <taxon>Pseudomonadota</taxon>
        <taxon>Gammaproteobacteria</taxon>
        <taxon>Enterobacterales</taxon>
        <taxon>Yersiniaceae</taxon>
        <taxon>Yersinia</taxon>
    </lineage>
</organism>
<name>ZAPD_YERPN</name>
<gene>
    <name evidence="1" type="primary">zapD</name>
    <name type="ordered locus">YPN_0658</name>
    <name type="ORF">YP516_0696</name>
</gene>
<reference key="1">
    <citation type="journal article" date="2006" name="J. Bacteriol.">
        <title>Complete genome sequence of Yersinia pestis strains Antiqua and Nepal516: evidence of gene reduction in an emerging pathogen.</title>
        <authorList>
            <person name="Chain P.S.G."/>
            <person name="Hu P."/>
            <person name="Malfatti S.A."/>
            <person name="Radnedge L."/>
            <person name="Larimer F."/>
            <person name="Vergez L.M."/>
            <person name="Worsham P."/>
            <person name="Chu M.C."/>
            <person name="Andersen G.L."/>
        </authorList>
    </citation>
    <scope>NUCLEOTIDE SEQUENCE [LARGE SCALE GENOMIC DNA]</scope>
    <source>
        <strain>Nepal516</strain>
    </source>
</reference>
<reference key="2">
    <citation type="submission" date="2009-04" db="EMBL/GenBank/DDBJ databases">
        <title>Yersinia pestis Nepal516A whole genome shotgun sequencing project.</title>
        <authorList>
            <person name="Plunkett G. III"/>
            <person name="Anderson B.D."/>
            <person name="Baumler D.J."/>
            <person name="Burland V."/>
            <person name="Cabot E.L."/>
            <person name="Glasner J.D."/>
            <person name="Mau B."/>
            <person name="Neeno-Eckwall E."/>
            <person name="Perna N.T."/>
            <person name="Munk A.C."/>
            <person name="Tapia R."/>
            <person name="Green L.D."/>
            <person name="Rogers Y.C."/>
            <person name="Detter J.C."/>
            <person name="Bruce D.C."/>
            <person name="Brettin T.S."/>
        </authorList>
    </citation>
    <scope>NUCLEOTIDE SEQUENCE [LARGE SCALE GENOMIC DNA]</scope>
    <source>
        <strain>Nepal516</strain>
    </source>
</reference>
<sequence length="250" mass="28427">MSDLTSTILFEHPLNEKMRTWLRMEFLLQQLESHRSLDNIANALTFFRTASDLIDVLERGEVRTDLLKELERQQQKLQQWADIPGVDVSLVDSLRNQLKSRAAVLMSAPRIGQSLKEDRLISVVRQRLSIPGGCCSFDLPTLHVWLHQPSEQRDQHINKLLASLAPLHQSLTIILDLIRQSCPLRSQISLNGFFQDNAGGADLLRLRLPLDPQLYPQISGHKTRYAIRFLALDSENGTVPARLSFELACC</sequence>
<proteinExistence type="inferred from homology"/>
<accession>Q1CLZ0</accession>
<accession>C4GQ19</accession>
<evidence type="ECO:0000255" key="1">
    <source>
        <dbReference type="HAMAP-Rule" id="MF_01092"/>
    </source>
</evidence>
<keyword id="KW-0131">Cell cycle</keyword>
<keyword id="KW-0132">Cell division</keyword>
<keyword id="KW-0963">Cytoplasm</keyword>
<keyword id="KW-0717">Septation</keyword>
<dbReference type="EMBL" id="CP000305">
    <property type="protein sequence ID" value="ABG16990.1"/>
    <property type="molecule type" value="Genomic_DNA"/>
</dbReference>
<dbReference type="EMBL" id="ACNQ01000007">
    <property type="protein sequence ID" value="EEO77845.1"/>
    <property type="molecule type" value="Genomic_DNA"/>
</dbReference>
<dbReference type="RefSeq" id="WP_002209318.1">
    <property type="nucleotide sequence ID" value="NZ_ACNQ01000007.1"/>
</dbReference>
<dbReference type="SMR" id="Q1CLZ0"/>
<dbReference type="GeneID" id="57975279"/>
<dbReference type="KEGG" id="ypn:YPN_0658"/>
<dbReference type="HOGENOM" id="CLU_076303_0_0_6"/>
<dbReference type="Proteomes" id="UP000008936">
    <property type="component" value="Chromosome"/>
</dbReference>
<dbReference type="GO" id="GO:0032153">
    <property type="term" value="C:cell division site"/>
    <property type="evidence" value="ECO:0007669"/>
    <property type="project" value="TreeGrafter"/>
</dbReference>
<dbReference type="GO" id="GO:0005737">
    <property type="term" value="C:cytoplasm"/>
    <property type="evidence" value="ECO:0007669"/>
    <property type="project" value="UniProtKB-SubCell"/>
</dbReference>
<dbReference type="GO" id="GO:0000917">
    <property type="term" value="P:division septum assembly"/>
    <property type="evidence" value="ECO:0007669"/>
    <property type="project" value="UniProtKB-KW"/>
</dbReference>
<dbReference type="GO" id="GO:0043093">
    <property type="term" value="P:FtsZ-dependent cytokinesis"/>
    <property type="evidence" value="ECO:0007669"/>
    <property type="project" value="UniProtKB-UniRule"/>
</dbReference>
<dbReference type="FunFam" id="1.10.3900.10:FF:000001">
    <property type="entry name" value="Cell division protein ZapD"/>
    <property type="match status" value="1"/>
</dbReference>
<dbReference type="FunFam" id="2.60.440.10:FF:000001">
    <property type="entry name" value="Cell division protein ZapD"/>
    <property type="match status" value="1"/>
</dbReference>
<dbReference type="Gene3D" id="1.10.3900.10">
    <property type="entry name" value="YacF-like"/>
    <property type="match status" value="1"/>
</dbReference>
<dbReference type="Gene3D" id="2.60.440.10">
    <property type="entry name" value="YacF-like domains"/>
    <property type="match status" value="1"/>
</dbReference>
<dbReference type="HAMAP" id="MF_01092">
    <property type="entry name" value="ZapD"/>
    <property type="match status" value="1"/>
</dbReference>
<dbReference type="InterPro" id="IPR009777">
    <property type="entry name" value="ZapD"/>
</dbReference>
<dbReference type="InterPro" id="IPR027462">
    <property type="entry name" value="ZapD_C"/>
</dbReference>
<dbReference type="InterPro" id="IPR036268">
    <property type="entry name" value="ZapD_sf"/>
</dbReference>
<dbReference type="NCBIfam" id="NF003653">
    <property type="entry name" value="PRK05287.1-1"/>
    <property type="match status" value="1"/>
</dbReference>
<dbReference type="NCBIfam" id="NF003655">
    <property type="entry name" value="PRK05287.1-3"/>
    <property type="match status" value="1"/>
</dbReference>
<dbReference type="PANTHER" id="PTHR39455">
    <property type="entry name" value="CELL DIVISION PROTEIN ZAPD"/>
    <property type="match status" value="1"/>
</dbReference>
<dbReference type="PANTHER" id="PTHR39455:SF1">
    <property type="entry name" value="CELL DIVISION PROTEIN ZAPD"/>
    <property type="match status" value="1"/>
</dbReference>
<dbReference type="Pfam" id="PF07072">
    <property type="entry name" value="ZapD"/>
    <property type="match status" value="1"/>
</dbReference>
<dbReference type="SUPFAM" id="SSF160950">
    <property type="entry name" value="YacF-like"/>
    <property type="match status" value="1"/>
</dbReference>
<feature type="chain" id="PRO_1000064932" description="Cell division protein ZapD">
    <location>
        <begin position="1"/>
        <end position="250"/>
    </location>
</feature>
<comment type="function">
    <text evidence="1">Cell division factor that enhances FtsZ-ring assembly. Directly interacts with FtsZ and promotes bundling of FtsZ protofilaments, with a reduction in FtsZ GTPase activity.</text>
</comment>
<comment type="subunit">
    <text evidence="1">Interacts with FtsZ.</text>
</comment>
<comment type="subcellular location">
    <subcellularLocation>
        <location evidence="1">Cytoplasm</location>
    </subcellularLocation>
    <text evidence="1">Localizes to mid-cell in an FtsZ-dependent manner.</text>
</comment>
<comment type="similarity">
    <text evidence="1">Belongs to the ZapD family.</text>
</comment>